<keyword id="KW-1003">Cell membrane</keyword>
<keyword id="KW-0963">Cytoplasm</keyword>
<keyword id="KW-0333">Golgi apparatus</keyword>
<keyword id="KW-0472">Membrane</keyword>
<keyword id="KW-0539">Nucleus</keyword>
<keyword id="KW-0597">Phosphoprotein</keyword>
<keyword id="KW-1185">Reference proteome</keyword>
<feature type="chain" id="PRO_0000260385" description="Caveolin-2">
    <location>
        <begin position="1"/>
        <end position="162"/>
    </location>
</feature>
<feature type="topological domain" description="Cytoplasmic" evidence="4">
    <location>
        <begin position="1"/>
        <end position="86"/>
    </location>
</feature>
<feature type="intramembrane region" description="Helical" evidence="4">
    <location>
        <begin position="87"/>
        <end position="107"/>
    </location>
</feature>
<feature type="topological domain" description="Cytoplasmic" evidence="4">
    <location>
        <begin position="108"/>
        <end position="162"/>
    </location>
</feature>
<feature type="modified residue" description="Phosphotyrosine; by SRC" evidence="2">
    <location>
        <position position="19"/>
    </location>
</feature>
<feature type="modified residue" description="Phosphoserine" evidence="3">
    <location>
        <position position="20"/>
    </location>
</feature>
<feature type="modified residue" description="Phosphoserine" evidence="2">
    <location>
        <position position="23"/>
    </location>
</feature>
<feature type="modified residue" description="Phosphotyrosine; by SRC" evidence="2">
    <location>
        <position position="27"/>
    </location>
</feature>
<feature type="modified residue" description="Phosphoserine" evidence="2">
    <location>
        <position position="36"/>
    </location>
</feature>
<comment type="function">
    <text evidence="1">May act as a scaffolding protein within caveolar membranes. Interacts directly with G-protein alpha subunits and can functionally regulate their activity. Acts as an accessory protein in conjunction with CAV1 in targeting to lipid rafts and driving caveolae formation. The Ser-36 phosphorylated form has a role in modulating mitosis in endothelial cells. Positive regulator of cellular mitogenesis of the MAPK signaling pathway. Required for the insulin-stimulated nuclear translocation and activation of MAPK1 and STAT3, and the subsequent regulation of cell cycle progression (By similarity).</text>
</comment>
<comment type="subunit">
    <text evidence="1">Monomer or homodimer (By similarity). Interacts with CAV1; the interaction forms a stable heterooligomeric complex that is required for targeting to lipid rafts and for caveolae formation. Tyrosine phosphorylated forms do not form heterooligomers with the Tyr-19-phosphorylated form existing as a monomer or dimer, and the Tyr-27-form as a monomer only. Interacts (tyrosine phosphorylated form) with the SH2 domain-containing proteins, RASA1, NCK1 and SRC. Interacts (tyrosine phosphorylated form) with INSR, the interaction (Tyr-27-phosphorylated form) is increased on insulin stimulation. Interacts (Tyr-19 phosphorylated form) with MAPK1 (phosphorylated form); the interaction, promoted by insulin, leads to nuclear location and MAPK1 activation. Interacts with STAT3; the interaction is increased on insulin-induced tyrosine phosphorylation leading to STAT activation (By similarity).</text>
</comment>
<comment type="subcellular location">
    <subcellularLocation>
        <location evidence="1">Nucleus</location>
    </subcellularLocation>
    <subcellularLocation>
        <location evidence="1">Cytoplasm</location>
    </subcellularLocation>
    <subcellularLocation>
        <location>Golgi apparatus membrane</location>
        <topology>Peripheral membrane protein</topology>
    </subcellularLocation>
    <subcellularLocation>
        <location>Cell membrane</location>
        <topology>Peripheral membrane protein</topology>
    </subcellularLocation>
    <subcellularLocation>
        <location>Membrane</location>
        <location>Caveola</location>
        <topology>Peripheral membrane protein</topology>
    </subcellularLocation>
    <text evidence="1">Potential hairpin-like structure in the membrane. Membrane protein of caveolae. Tyr-19-phosphorylated form is enriched at sites of cell-cell contact and is translocated to the nucleus in complex with MAPK1 in response to insulin (By similarity). Tyr-27-phosphorylated form is located both in the cytoplasm and plasma membrane. CAV1-mediated Ser-23-phosphorylated form locates to the plasma membrane. Ser-36-phosphorylated form resides in intracellular compartments.</text>
</comment>
<comment type="PTM">
    <text evidence="1">Phosphorylated on serine and tyrosine residues. CAV1 promotes phosphorylation on Ser-23 which then targets the complex to the plasma membrane, lipid rafts and caveolae. Phosphorylation on Ser-36 appears to modulate mitosis in endothelial cells (By similarity). Phosphorylation on both Tyr-19 and Tyr-27 is required for insulin-induced 'Ser-727' phosphorylation of STAT3 and its activation. Phosphorylation on Tyr-19 is required for insulin-induced phosphorylation of MAPK1 and DNA binding of STAT3. Tyrosine phosphorylation is induced by both EGF and insulin (By. similarity).</text>
</comment>
<comment type="similarity">
    <text evidence="5">Belongs to the caveolin family.</text>
</comment>
<organism>
    <name type="scientific">Saimiri boliviensis boliviensis</name>
    <name type="common">Bolivian squirrel monkey</name>
    <dbReference type="NCBI Taxonomy" id="39432"/>
    <lineage>
        <taxon>Eukaryota</taxon>
        <taxon>Metazoa</taxon>
        <taxon>Chordata</taxon>
        <taxon>Craniata</taxon>
        <taxon>Vertebrata</taxon>
        <taxon>Euteleostomi</taxon>
        <taxon>Mammalia</taxon>
        <taxon>Eutheria</taxon>
        <taxon>Euarchontoglires</taxon>
        <taxon>Primates</taxon>
        <taxon>Haplorrhini</taxon>
        <taxon>Platyrrhini</taxon>
        <taxon>Cebidae</taxon>
        <taxon>Saimiriinae</taxon>
        <taxon>Saimiri</taxon>
    </lineage>
</organism>
<protein>
    <recommendedName>
        <fullName>Caveolin-2</fullName>
    </recommendedName>
</protein>
<gene>
    <name type="primary">CAV2</name>
</gene>
<name>CAV2_SAIBB</name>
<accession>Q09YH9</accession>
<sequence>MGLETEKADVQLFMDDDSYSHHSGLEYADPEKFVDSGQDRDPHRLNSHLKLGFEDVIAEPVTTHSFDKVWICSHALFEISKYVMYKFLTVFLSIPLAFLAGILFATLSCLHIWIIMPFVKTCLMVLPSVQTIWKSVTDAIIAPLCTSIGRSFSSVSLQLSHD</sequence>
<evidence type="ECO:0000250" key="1"/>
<evidence type="ECO:0000250" key="2">
    <source>
        <dbReference type="UniProtKB" id="P51636"/>
    </source>
</evidence>
<evidence type="ECO:0000250" key="3">
    <source>
        <dbReference type="UniProtKB" id="Q9WVC3"/>
    </source>
</evidence>
<evidence type="ECO:0000255" key="4"/>
<evidence type="ECO:0000305" key="5"/>
<proteinExistence type="inferred from homology"/>
<dbReference type="EMBL" id="DP000180">
    <property type="protein sequence ID" value="ABI75301.1"/>
    <property type="molecule type" value="Genomic_DNA"/>
</dbReference>
<dbReference type="RefSeq" id="XP_003921112.1">
    <property type="nucleotide sequence ID" value="XM_003921063.2"/>
</dbReference>
<dbReference type="SMR" id="Q09YH9"/>
<dbReference type="STRING" id="39432.ENSSBOP00000012624"/>
<dbReference type="Ensembl" id="ENSSBOT00000029416.1">
    <property type="protein sequence ID" value="ENSSBOP00000012624.1"/>
    <property type="gene ID" value="ENSSBOG00000023114.1"/>
</dbReference>
<dbReference type="GeneID" id="101039961"/>
<dbReference type="KEGG" id="sbq:101039961"/>
<dbReference type="CTD" id="858"/>
<dbReference type="GeneTree" id="ENSGT00950000183006"/>
<dbReference type="OMA" id="TRIFMDD"/>
<dbReference type="Proteomes" id="UP000233220">
    <property type="component" value="Unplaced"/>
</dbReference>
<dbReference type="GO" id="GO:0002080">
    <property type="term" value="C:acrosomal membrane"/>
    <property type="evidence" value="ECO:0007669"/>
    <property type="project" value="Ensembl"/>
</dbReference>
<dbReference type="GO" id="GO:0005901">
    <property type="term" value="C:caveola"/>
    <property type="evidence" value="ECO:0000250"/>
    <property type="project" value="UniProtKB"/>
</dbReference>
<dbReference type="GO" id="GO:0002095">
    <property type="term" value="C:caveolar macromolecular signaling complex"/>
    <property type="evidence" value="ECO:0007669"/>
    <property type="project" value="Ensembl"/>
</dbReference>
<dbReference type="GO" id="GO:0005925">
    <property type="term" value="C:focal adhesion"/>
    <property type="evidence" value="ECO:0007669"/>
    <property type="project" value="Ensembl"/>
</dbReference>
<dbReference type="GO" id="GO:0000139">
    <property type="term" value="C:Golgi membrane"/>
    <property type="evidence" value="ECO:0007669"/>
    <property type="project" value="UniProtKB-SubCell"/>
</dbReference>
<dbReference type="GO" id="GO:0005634">
    <property type="term" value="C:nucleus"/>
    <property type="evidence" value="ECO:0007669"/>
    <property type="project" value="UniProtKB-SubCell"/>
</dbReference>
<dbReference type="GO" id="GO:0048471">
    <property type="term" value="C:perinuclear region of cytoplasm"/>
    <property type="evidence" value="ECO:0000250"/>
    <property type="project" value="UniProtKB"/>
</dbReference>
<dbReference type="GO" id="GO:0044853">
    <property type="term" value="C:plasma membrane raft"/>
    <property type="evidence" value="ECO:0000250"/>
    <property type="project" value="UniProtKB"/>
</dbReference>
<dbReference type="GO" id="GO:0042383">
    <property type="term" value="C:sarcolemma"/>
    <property type="evidence" value="ECO:0007669"/>
    <property type="project" value="TreeGrafter"/>
</dbReference>
<dbReference type="GO" id="GO:0030133">
    <property type="term" value="C:transport vesicle"/>
    <property type="evidence" value="ECO:0007669"/>
    <property type="project" value="Ensembl"/>
</dbReference>
<dbReference type="GO" id="GO:0031748">
    <property type="term" value="F:D1 dopamine receptor binding"/>
    <property type="evidence" value="ECO:0000250"/>
    <property type="project" value="UniProtKB"/>
</dbReference>
<dbReference type="GO" id="GO:0046982">
    <property type="term" value="F:protein heterodimerization activity"/>
    <property type="evidence" value="ECO:0007669"/>
    <property type="project" value="Ensembl"/>
</dbReference>
<dbReference type="GO" id="GO:0042803">
    <property type="term" value="F:protein homodimerization activity"/>
    <property type="evidence" value="ECO:0007669"/>
    <property type="project" value="Ensembl"/>
</dbReference>
<dbReference type="GO" id="GO:0019901">
    <property type="term" value="F:protein kinase binding"/>
    <property type="evidence" value="ECO:0007669"/>
    <property type="project" value="Ensembl"/>
</dbReference>
<dbReference type="GO" id="GO:0030674">
    <property type="term" value="F:protein-macromolecule adaptor activity"/>
    <property type="evidence" value="ECO:0007669"/>
    <property type="project" value="Ensembl"/>
</dbReference>
<dbReference type="GO" id="GO:0097110">
    <property type="term" value="F:scaffold protein binding"/>
    <property type="evidence" value="ECO:0007669"/>
    <property type="project" value="Ensembl"/>
</dbReference>
<dbReference type="GO" id="GO:0071711">
    <property type="term" value="P:basement membrane organization"/>
    <property type="evidence" value="ECO:0007669"/>
    <property type="project" value="Ensembl"/>
</dbReference>
<dbReference type="GO" id="GO:0070836">
    <property type="term" value="P:caveola assembly"/>
    <property type="evidence" value="ECO:0000250"/>
    <property type="project" value="UniProtKB"/>
</dbReference>
<dbReference type="GO" id="GO:0007029">
    <property type="term" value="P:endoplasmic reticulum organization"/>
    <property type="evidence" value="ECO:0000250"/>
    <property type="project" value="UniProtKB"/>
</dbReference>
<dbReference type="GO" id="GO:0001935">
    <property type="term" value="P:endothelial cell proliferation"/>
    <property type="evidence" value="ECO:0007669"/>
    <property type="project" value="Ensembl"/>
</dbReference>
<dbReference type="GO" id="GO:0008286">
    <property type="term" value="P:insulin receptor signaling pathway"/>
    <property type="evidence" value="ECO:0007669"/>
    <property type="project" value="Ensembl"/>
</dbReference>
<dbReference type="GO" id="GO:0007005">
    <property type="term" value="P:mitochondrion organization"/>
    <property type="evidence" value="ECO:0000250"/>
    <property type="project" value="UniProtKB"/>
</dbReference>
<dbReference type="GO" id="GO:0001937">
    <property type="term" value="P:negative regulation of endothelial cell proliferation"/>
    <property type="evidence" value="ECO:0000250"/>
    <property type="project" value="UniProtKB"/>
</dbReference>
<dbReference type="GO" id="GO:0014859">
    <property type="term" value="P:negative regulation of skeletal muscle cell proliferation"/>
    <property type="evidence" value="ECO:0007669"/>
    <property type="project" value="Ensembl"/>
</dbReference>
<dbReference type="GO" id="GO:0030512">
    <property type="term" value="P:negative regulation of transforming growth factor beta receptor signaling pathway"/>
    <property type="evidence" value="ECO:0007669"/>
    <property type="project" value="Ensembl"/>
</dbReference>
<dbReference type="GO" id="GO:0044794">
    <property type="term" value="P:positive regulation by host of viral process"/>
    <property type="evidence" value="ECO:0007669"/>
    <property type="project" value="Ensembl"/>
</dbReference>
<dbReference type="GO" id="GO:0060161">
    <property type="term" value="P:positive regulation of dopamine receptor signaling pathway"/>
    <property type="evidence" value="ECO:0000250"/>
    <property type="project" value="UniProtKB"/>
</dbReference>
<dbReference type="GO" id="GO:0001938">
    <property type="term" value="P:positive regulation of endothelial cell proliferation"/>
    <property type="evidence" value="ECO:0007669"/>
    <property type="project" value="Ensembl"/>
</dbReference>
<dbReference type="GO" id="GO:0043410">
    <property type="term" value="P:positive regulation of MAPK cascade"/>
    <property type="evidence" value="ECO:0007669"/>
    <property type="project" value="Ensembl"/>
</dbReference>
<dbReference type="GO" id="GO:0019065">
    <property type="term" value="P:receptor-mediated endocytosis of virus by host cell"/>
    <property type="evidence" value="ECO:0007669"/>
    <property type="project" value="Ensembl"/>
</dbReference>
<dbReference type="GO" id="GO:0051480">
    <property type="term" value="P:regulation of cytosolic calcium ion concentration"/>
    <property type="evidence" value="ECO:0007669"/>
    <property type="project" value="TreeGrafter"/>
</dbReference>
<dbReference type="GO" id="GO:0007088">
    <property type="term" value="P:regulation of mitotic nuclear division"/>
    <property type="evidence" value="ECO:0007669"/>
    <property type="project" value="Ensembl"/>
</dbReference>
<dbReference type="GO" id="GO:0014856">
    <property type="term" value="P:skeletal muscle cell proliferation"/>
    <property type="evidence" value="ECO:0007669"/>
    <property type="project" value="Ensembl"/>
</dbReference>
<dbReference type="GO" id="GO:0048741">
    <property type="term" value="P:skeletal muscle fiber development"/>
    <property type="evidence" value="ECO:0000250"/>
    <property type="project" value="UniProtKB"/>
</dbReference>
<dbReference type="GO" id="GO:0007179">
    <property type="term" value="P:transforming growth factor beta receptor signaling pathway"/>
    <property type="evidence" value="ECO:0007669"/>
    <property type="project" value="Ensembl"/>
</dbReference>
<dbReference type="GO" id="GO:0048278">
    <property type="term" value="P:vesicle docking"/>
    <property type="evidence" value="ECO:0000250"/>
    <property type="project" value="UniProtKB"/>
</dbReference>
<dbReference type="GO" id="GO:0006906">
    <property type="term" value="P:vesicle fusion"/>
    <property type="evidence" value="ECO:0000250"/>
    <property type="project" value="UniProtKB"/>
</dbReference>
<dbReference type="GO" id="GO:0019076">
    <property type="term" value="P:viral release from host cell"/>
    <property type="evidence" value="ECO:0007669"/>
    <property type="project" value="Ensembl"/>
</dbReference>
<dbReference type="InterPro" id="IPR001612">
    <property type="entry name" value="Caveolin"/>
</dbReference>
<dbReference type="InterPro" id="IPR018361">
    <property type="entry name" value="Caveolin_CS"/>
</dbReference>
<dbReference type="PANTHER" id="PTHR10844">
    <property type="entry name" value="CAVEOLIN"/>
    <property type="match status" value="1"/>
</dbReference>
<dbReference type="PANTHER" id="PTHR10844:SF3">
    <property type="entry name" value="CAVEOLIN-2"/>
    <property type="match status" value="1"/>
</dbReference>
<dbReference type="Pfam" id="PF01146">
    <property type="entry name" value="Caveolin"/>
    <property type="match status" value="1"/>
</dbReference>
<dbReference type="PROSITE" id="PS01210">
    <property type="entry name" value="CAVEOLIN"/>
    <property type="match status" value="1"/>
</dbReference>
<reference key="1">
    <citation type="submission" date="2006-09" db="EMBL/GenBank/DDBJ databases">
        <title>NISC comparative sequencing initiative.</title>
        <authorList>
            <person name="Antonellis A."/>
            <person name="Ayele K."/>
            <person name="Benjamin B."/>
            <person name="Blakesley R.W."/>
            <person name="Boakye A."/>
            <person name="Bouffard G.G."/>
            <person name="Brinkley C."/>
            <person name="Brooks S."/>
            <person name="Chu G."/>
            <person name="Coleman H."/>
            <person name="Engle J."/>
            <person name="Gestole M."/>
            <person name="Greene A."/>
            <person name="Guan X."/>
            <person name="Gupta J."/>
            <person name="Haghighi P."/>
            <person name="Han J."/>
            <person name="Hansen N."/>
            <person name="Ho S.-L."/>
            <person name="Hu P."/>
            <person name="Hunter G."/>
            <person name="Hurle B."/>
            <person name="Idol J.R."/>
            <person name="Kwong P."/>
            <person name="Laric P."/>
            <person name="Larson S."/>
            <person name="Lee-Lin S.-Q."/>
            <person name="Legaspi R."/>
            <person name="Madden M."/>
            <person name="Maduro Q.L."/>
            <person name="Maduro V.B."/>
            <person name="Margulies E.H."/>
            <person name="Masiello C."/>
            <person name="Maskeri B."/>
            <person name="McDowell J."/>
            <person name="Mojidi H.A."/>
            <person name="Mullikin J.C."/>
            <person name="Oestreicher J.S."/>
            <person name="Park M."/>
            <person name="Portnoy M.E."/>
            <person name="Prasad A."/>
            <person name="Puri O."/>
            <person name="Reddix-Dugue N."/>
            <person name="Schandler K."/>
            <person name="Schueler M.G."/>
            <person name="Sison C."/>
            <person name="Stantripop S."/>
            <person name="Stephen E."/>
            <person name="Taye A."/>
            <person name="Thomas J.W."/>
            <person name="Thomas P.J."/>
            <person name="Tsipouri V."/>
            <person name="Ung L."/>
            <person name="Vogt J.L."/>
            <person name="Wetherby K.D."/>
            <person name="Young A."/>
            <person name="Green E.D."/>
        </authorList>
    </citation>
    <scope>NUCLEOTIDE SEQUENCE [LARGE SCALE GENOMIC DNA]</scope>
</reference>